<protein>
    <recommendedName>
        <fullName evidence="6">Endoplasmic reticulum chaperone BiP</fullName>
        <ecNumber evidence="1">3.6.4.10</ecNumber>
    </recommendedName>
    <alternativeName>
        <fullName evidence="6">Immunoglobulin heavy chain-binding protein homolog</fullName>
        <shortName evidence="6">BiP</shortName>
    </alternativeName>
</protein>
<organism evidence="6">
    <name type="scientific">Aspergillus kawachii</name>
    <name type="common">White koji mold</name>
    <name type="synonym">Aspergillus awamori var. kawachi</name>
    <dbReference type="NCBI Taxonomy" id="1069201"/>
    <lineage>
        <taxon>Eukaryota</taxon>
        <taxon>Fungi</taxon>
        <taxon>Dikarya</taxon>
        <taxon>Ascomycota</taxon>
        <taxon>Pezizomycotina</taxon>
        <taxon>Eurotiomycetes</taxon>
        <taxon>Eurotiomycetidae</taxon>
        <taxon>Eurotiales</taxon>
        <taxon>Aspergillaceae</taxon>
        <taxon>Aspergillus</taxon>
        <taxon>Aspergillus subgen. Circumdati</taxon>
    </lineage>
</organism>
<feature type="signal peptide" evidence="3">
    <location>
        <begin position="1"/>
        <end position="38"/>
    </location>
</feature>
<feature type="chain" id="PRO_0000013579" description="Endoplasmic reticulum chaperone BiP">
    <location>
        <begin position="39"/>
        <end position="672"/>
    </location>
</feature>
<feature type="region of interest" description="Nucleotide-binding (NBD)" evidence="1">
    <location>
        <begin position="145"/>
        <end position="299"/>
    </location>
</feature>
<feature type="region of interest" description="Substrate-binding (SBD)" evidence="1">
    <location>
        <begin position="419"/>
        <end position="519"/>
    </location>
</feature>
<feature type="short sequence motif" description="Prevents secretion from ER" evidence="4">
    <location>
        <begin position="669"/>
        <end position="672"/>
    </location>
</feature>
<feature type="binding site" evidence="1">
    <location>
        <begin position="57"/>
        <end position="60"/>
    </location>
    <ligand>
        <name>ATP</name>
        <dbReference type="ChEBI" id="CHEBI:30616"/>
    </ligand>
</feature>
<feature type="binding site" evidence="1">
    <location>
        <position position="116"/>
    </location>
    <ligand>
        <name>ATP</name>
        <dbReference type="ChEBI" id="CHEBI:30616"/>
    </ligand>
</feature>
<feature type="binding site" evidence="1">
    <location>
        <begin position="246"/>
        <end position="248"/>
    </location>
    <ligand>
        <name>ATP</name>
        <dbReference type="ChEBI" id="CHEBI:30616"/>
    </ligand>
</feature>
<feature type="binding site" evidence="1">
    <location>
        <begin position="312"/>
        <end position="319"/>
    </location>
    <ligand>
        <name>ATP</name>
        <dbReference type="ChEBI" id="CHEBI:30616"/>
    </ligand>
</feature>
<feature type="binding site" evidence="1">
    <location>
        <begin position="383"/>
        <end position="386"/>
    </location>
    <ligand>
        <name>ATP</name>
        <dbReference type="ChEBI" id="CHEBI:30616"/>
    </ligand>
</feature>
<proteinExistence type="inferred from homology"/>
<keyword id="KW-0067">ATP-binding</keyword>
<keyword id="KW-0143">Chaperone</keyword>
<keyword id="KW-0256">Endoplasmic reticulum</keyword>
<keyword id="KW-0378">Hydrolase</keyword>
<keyword id="KW-0547">Nucleotide-binding</keyword>
<keyword id="KW-0732">Signal</keyword>
<keyword id="KW-0346">Stress response</keyword>
<sequence>MARISHQGAAKPFTAWTTIFYLLLVFIAPLAFFGTAHAQDETSPQESYGTVIGIDLGTTYSCVGVMQNGKVEILVNDQGNRITPSYVAFTDEERLVGDAAKNQYAANPRRTIFDIKRLIGRKFDDKDVQKDAKHFPYKVVNKDGKPHVKVDVNQTPKTLTPEEVSAMVLGKMKEIAEGYLGKKVTHAVVTVPAYFNDAQRQATKDAGTIAGLNVLRVVNEPTAAAIAYGLDKTGDERQVIVYDLGGGTFDVSLLSIDNGVFEVLATAGDTHLGGEDFDQRVMDHFVKLYNKKNNVDVTKDLKAMGKLKREVEKAKRTLSSQMSTRIEIEAFHNGEDFSETLTRAKFEELNMDLFKKTLKPVEQVLKDAKVKKSEVDDIVLVGGSTRIPKVQALLEEFFGGKKASKGINPDEAVAFGAAVQGGVLSGEEGTGDVVLMDVNPLTLGIETTGGVMTKLIPRNTVIPTRKSQIFSTAADNQPTVLIQVYEGERSLTKDNNLLGKFELTGIPPAPRGVPQIEVSFDLDANGILKVHASDKGTGKAESITITNDKGRLSQEEIDRMVAEAEEFAEEDKAIKAKIEARNTLENYAFSLKNQVNDENGLGGQIDEDDKQTILDAVKEVTEWLEDNAATATTEDFEEQKEQLSNVAYPITSKLYGSAPADEDDEPSGHDEL</sequence>
<name>BIP_ASPKA</name>
<dbReference type="EC" id="3.6.4.10" evidence="1"/>
<dbReference type="EMBL" id="AF183893">
    <property type="protein sequence ID" value="AAG10649.1"/>
    <property type="molecule type" value="Genomic_DNA"/>
</dbReference>
<dbReference type="SMR" id="P83617"/>
<dbReference type="VEuPathDB" id="FungiDB:AKAW_01955"/>
<dbReference type="GO" id="GO:0005788">
    <property type="term" value="C:endoplasmic reticulum lumen"/>
    <property type="evidence" value="ECO:0007669"/>
    <property type="project" value="UniProtKB-SubCell"/>
</dbReference>
<dbReference type="GO" id="GO:0005524">
    <property type="term" value="F:ATP binding"/>
    <property type="evidence" value="ECO:0007669"/>
    <property type="project" value="UniProtKB-KW"/>
</dbReference>
<dbReference type="GO" id="GO:0016887">
    <property type="term" value="F:ATP hydrolysis activity"/>
    <property type="evidence" value="ECO:0007669"/>
    <property type="project" value="RHEA"/>
</dbReference>
<dbReference type="GO" id="GO:0140662">
    <property type="term" value="F:ATP-dependent protein folding chaperone"/>
    <property type="evidence" value="ECO:0007669"/>
    <property type="project" value="InterPro"/>
</dbReference>
<dbReference type="GO" id="GO:0006986">
    <property type="term" value="P:response to unfolded protein"/>
    <property type="evidence" value="ECO:0000250"/>
    <property type="project" value="UniProtKB"/>
</dbReference>
<dbReference type="CDD" id="cd10241">
    <property type="entry name" value="ASKHA_NBD_HSP70_BiP"/>
    <property type="match status" value="1"/>
</dbReference>
<dbReference type="FunFam" id="1.20.1270.10:FF:000009">
    <property type="entry name" value="DnaK-type molecular chaperone BiP"/>
    <property type="match status" value="1"/>
</dbReference>
<dbReference type="FunFam" id="3.90.640.10:FF:000153">
    <property type="entry name" value="Endoplasmic reticulum chaperone BiP"/>
    <property type="match status" value="1"/>
</dbReference>
<dbReference type="FunFam" id="2.60.34.10:FF:000002">
    <property type="entry name" value="Heat shock 70 kDa"/>
    <property type="match status" value="1"/>
</dbReference>
<dbReference type="FunFam" id="3.30.420.40:FF:000172">
    <property type="entry name" value="Heat shock 70 kDa protein"/>
    <property type="match status" value="1"/>
</dbReference>
<dbReference type="FunFam" id="3.30.30.30:FF:000001">
    <property type="entry name" value="heat shock 70 kDa protein-like"/>
    <property type="match status" value="1"/>
</dbReference>
<dbReference type="FunFam" id="3.30.420.40:FF:000026">
    <property type="entry name" value="Heat shock protein 70"/>
    <property type="match status" value="1"/>
</dbReference>
<dbReference type="Gene3D" id="1.20.1270.10">
    <property type="match status" value="1"/>
</dbReference>
<dbReference type="Gene3D" id="3.30.30.30">
    <property type="match status" value="1"/>
</dbReference>
<dbReference type="Gene3D" id="3.30.420.40">
    <property type="match status" value="2"/>
</dbReference>
<dbReference type="Gene3D" id="3.90.640.10">
    <property type="entry name" value="Actin, Chain A, domain 4"/>
    <property type="match status" value="1"/>
</dbReference>
<dbReference type="Gene3D" id="2.60.34.10">
    <property type="entry name" value="Substrate Binding Domain Of DNAk, Chain A, domain 1"/>
    <property type="match status" value="1"/>
</dbReference>
<dbReference type="InterPro" id="IPR043129">
    <property type="entry name" value="ATPase_NBD"/>
</dbReference>
<dbReference type="InterPro" id="IPR042050">
    <property type="entry name" value="BIP_NBD"/>
</dbReference>
<dbReference type="InterPro" id="IPR018181">
    <property type="entry name" value="Heat_shock_70_CS"/>
</dbReference>
<dbReference type="InterPro" id="IPR029048">
    <property type="entry name" value="HSP70_C_sf"/>
</dbReference>
<dbReference type="InterPro" id="IPR029047">
    <property type="entry name" value="HSP70_peptide-bd_sf"/>
</dbReference>
<dbReference type="InterPro" id="IPR013126">
    <property type="entry name" value="Hsp_70_fam"/>
</dbReference>
<dbReference type="NCBIfam" id="NF001413">
    <property type="entry name" value="PRK00290.1"/>
    <property type="match status" value="1"/>
</dbReference>
<dbReference type="PANTHER" id="PTHR19375">
    <property type="entry name" value="HEAT SHOCK PROTEIN 70KDA"/>
    <property type="match status" value="1"/>
</dbReference>
<dbReference type="Pfam" id="PF00012">
    <property type="entry name" value="HSP70"/>
    <property type="match status" value="1"/>
</dbReference>
<dbReference type="PRINTS" id="PR00301">
    <property type="entry name" value="HEATSHOCK70"/>
</dbReference>
<dbReference type="SUPFAM" id="SSF53067">
    <property type="entry name" value="Actin-like ATPase domain"/>
    <property type="match status" value="2"/>
</dbReference>
<dbReference type="SUPFAM" id="SSF100934">
    <property type="entry name" value="Heat shock protein 70kD (HSP70), C-terminal subdomain"/>
    <property type="match status" value="1"/>
</dbReference>
<dbReference type="SUPFAM" id="SSF100920">
    <property type="entry name" value="Heat shock protein 70kD (HSP70), peptide-binding domain"/>
    <property type="match status" value="1"/>
</dbReference>
<dbReference type="PROSITE" id="PS00014">
    <property type="entry name" value="ER_TARGET"/>
    <property type="match status" value="1"/>
</dbReference>
<dbReference type="PROSITE" id="PS00297">
    <property type="entry name" value="HSP70_1"/>
    <property type="match status" value="1"/>
</dbReference>
<dbReference type="PROSITE" id="PS00329">
    <property type="entry name" value="HSP70_2"/>
    <property type="match status" value="1"/>
</dbReference>
<dbReference type="PROSITE" id="PS01036">
    <property type="entry name" value="HSP70_3"/>
    <property type="match status" value="1"/>
</dbReference>
<gene>
    <name type="primary">bipA</name>
</gene>
<evidence type="ECO:0000250" key="1">
    <source>
        <dbReference type="UniProtKB" id="P11021"/>
    </source>
</evidence>
<evidence type="ECO:0000250" key="2">
    <source>
        <dbReference type="UniProtKB" id="P16474"/>
    </source>
</evidence>
<evidence type="ECO:0000255" key="3"/>
<evidence type="ECO:0000255" key="4">
    <source>
        <dbReference type="PROSITE-ProRule" id="PRU10138"/>
    </source>
</evidence>
<evidence type="ECO:0000255" key="5">
    <source>
        <dbReference type="RuleBase" id="RU003322"/>
    </source>
</evidence>
<evidence type="ECO:0000305" key="6"/>
<evidence type="ECO:0000312" key="7">
    <source>
        <dbReference type="EMBL" id="AAG10649.1"/>
    </source>
</evidence>
<accession>P83617</accession>
<accession>O13280</accession>
<accession>O14453</accession>
<reference evidence="7" key="1">
    <citation type="submission" date="1999-09" db="EMBL/GenBank/DDBJ databases">
        <title>Molecular cloning of the bipA gene of Aspergillus awamori var. kawachi.</title>
        <authorList>
            <person name="Goto M."/>
            <person name="Shinoda N."/>
            <person name="Furukawa K."/>
        </authorList>
    </citation>
    <scope>NUCLEOTIDE SEQUENCE [GENOMIC DNA]</scope>
    <source>
        <strain evidence="7">ORI-1</strain>
    </source>
</reference>
<comment type="function">
    <text evidence="2">Probably plays a role in facilitating the assembly of multimeric protein complexes inside the ER. Is required for secretory polypeptide translocation. May physically associate with SEC63 protein in the endoplasmic reticulum and this interaction may be regulated by ATP hydrolysis.</text>
</comment>
<comment type="catalytic activity">
    <reaction evidence="1">
        <text>ATP + H2O = ADP + phosphate + H(+)</text>
        <dbReference type="Rhea" id="RHEA:13065"/>
        <dbReference type="ChEBI" id="CHEBI:15377"/>
        <dbReference type="ChEBI" id="CHEBI:15378"/>
        <dbReference type="ChEBI" id="CHEBI:30616"/>
        <dbReference type="ChEBI" id="CHEBI:43474"/>
        <dbReference type="ChEBI" id="CHEBI:456216"/>
        <dbReference type="EC" id="3.6.4.10"/>
    </reaction>
</comment>
<comment type="activity regulation">
    <text evidence="1">The chaperone activity is regulated by ATP-induced allosteric coupling of the nucleotide-binding (NBD) and substrate-binding (SBD) domains. In the ADP-bound and nucleotide-free (apo) states, the two domains have little interaction. In contrast, in the ATP-bound state the two domains are tightly coupled, which results in drastically accelerated kinetics in both binding and release of polypeptide substrates. J domain-containing co-chaperones stimulate the ATPase activity and are required for efficient substrate recognition.</text>
</comment>
<comment type="subcellular location">
    <subcellularLocation>
        <location evidence="2 4">Endoplasmic reticulum lumen</location>
    </subcellularLocation>
</comment>
<comment type="similarity">
    <text evidence="5 6">Belongs to the heat shock protein 70 family.</text>
</comment>